<feature type="chain" id="PRO_0000295891" description="Dual specificity phosphatase 29">
    <location>
        <begin position="1"/>
        <end position="209"/>
    </location>
</feature>
<feature type="domain" description="Tyrosine-protein phosphatase" evidence="3">
    <location>
        <begin position="45"/>
        <end position="193"/>
    </location>
</feature>
<feature type="active site" description="Phosphocysteine intermediate" evidence="3">
    <location>
        <position position="138"/>
    </location>
</feature>
<feature type="binding site" evidence="1">
    <location>
        <begin position="137"/>
        <end position="144"/>
    </location>
    <ligand>
        <name>substrate</name>
    </ligand>
</feature>
<organism>
    <name type="scientific">Xenopus laevis</name>
    <name type="common">African clawed frog</name>
    <dbReference type="NCBI Taxonomy" id="8355"/>
    <lineage>
        <taxon>Eukaryota</taxon>
        <taxon>Metazoa</taxon>
        <taxon>Chordata</taxon>
        <taxon>Craniata</taxon>
        <taxon>Vertebrata</taxon>
        <taxon>Euteleostomi</taxon>
        <taxon>Amphibia</taxon>
        <taxon>Batrachia</taxon>
        <taxon>Anura</taxon>
        <taxon>Pipoidea</taxon>
        <taxon>Pipidae</taxon>
        <taxon>Xenopodinae</taxon>
        <taxon>Xenopus</taxon>
        <taxon>Xenopus</taxon>
    </lineage>
</organism>
<sequence length="209" mass="23750">MPADTPIRKKPNAYASVVDPDTGYCTPGAFELERLFWHGAPKYTHVNEVWPNLYIGDEKTALDRYSLEKNGFTHILNAAHGRWNVDTGPEYYSDMTVEYYGVEAEDLPSFNLSQFFYPAAQFIHKALSTPNSKLLVNCAMGRSRSASLVLAYLMIYKNMTVVESITQVLKHRCILPNRGFLKQLRELDIKLALEKRDTHGTANKAQKDD</sequence>
<protein>
    <recommendedName>
        <fullName>Dual specificity phosphatase 29</fullName>
    </recommendedName>
    <alternativeName>
        <fullName>Dual specificity phosphatase DUPD1</fullName>
        <ecNumber evidence="1">3.1.3.16</ecNumber>
        <ecNumber evidence="1">3.1.3.48</ecNumber>
    </alternativeName>
</protein>
<proteinExistence type="evidence at transcript level"/>
<comment type="function">
    <text evidence="1">Dual specificity phosphatase able to dephosphorylate phosphotyrosine, phosphoserine and phosphothreonine residues, with a preference for phosphotyrosine as a substrate.</text>
</comment>
<comment type="function">
    <text evidence="1 2">Dual specificity phosphatase able to dephosphorylate phosphotyrosine, phosphoserine and phosphothreonine residues within the same substrate, with a preference for phosphotyrosine as a substrate (By similarity). Involved in the modulation of AMPK and MAPK1/2 signaling pathway (By similarity).</text>
</comment>
<comment type="catalytic activity">
    <reaction evidence="1">
        <text>O-phospho-L-tyrosyl-[protein] + H2O = L-tyrosyl-[protein] + phosphate</text>
        <dbReference type="Rhea" id="RHEA:10684"/>
        <dbReference type="Rhea" id="RHEA-COMP:10136"/>
        <dbReference type="Rhea" id="RHEA-COMP:20101"/>
        <dbReference type="ChEBI" id="CHEBI:15377"/>
        <dbReference type="ChEBI" id="CHEBI:43474"/>
        <dbReference type="ChEBI" id="CHEBI:46858"/>
        <dbReference type="ChEBI" id="CHEBI:61978"/>
        <dbReference type="EC" id="3.1.3.48"/>
    </reaction>
</comment>
<comment type="catalytic activity">
    <reaction evidence="1">
        <text>O-phospho-L-seryl-[protein] + H2O = L-seryl-[protein] + phosphate</text>
        <dbReference type="Rhea" id="RHEA:20629"/>
        <dbReference type="Rhea" id="RHEA-COMP:9863"/>
        <dbReference type="Rhea" id="RHEA-COMP:11604"/>
        <dbReference type="ChEBI" id="CHEBI:15377"/>
        <dbReference type="ChEBI" id="CHEBI:29999"/>
        <dbReference type="ChEBI" id="CHEBI:43474"/>
        <dbReference type="ChEBI" id="CHEBI:83421"/>
        <dbReference type="EC" id="3.1.3.16"/>
    </reaction>
</comment>
<comment type="catalytic activity">
    <reaction evidence="1">
        <text>O-phospho-L-threonyl-[protein] + H2O = L-threonyl-[protein] + phosphate</text>
        <dbReference type="Rhea" id="RHEA:47004"/>
        <dbReference type="Rhea" id="RHEA-COMP:11060"/>
        <dbReference type="Rhea" id="RHEA-COMP:11605"/>
        <dbReference type="ChEBI" id="CHEBI:15377"/>
        <dbReference type="ChEBI" id="CHEBI:30013"/>
        <dbReference type="ChEBI" id="CHEBI:43474"/>
        <dbReference type="ChEBI" id="CHEBI:61977"/>
        <dbReference type="EC" id="3.1.3.16"/>
    </reaction>
</comment>
<comment type="subcellular location">
    <subcellularLocation>
        <location evidence="1">Cytoplasm</location>
    </subcellularLocation>
    <subcellularLocation>
        <location evidence="2">Nucleus</location>
    </subcellularLocation>
</comment>
<comment type="similarity">
    <text evidence="4">Belongs to the protein-tyrosine phosphatase family. Non-receptor class dual specificity subfamily.</text>
</comment>
<comment type="sequence caution" evidence="4">
    <conflict type="erroneous initiation">
        <sequence resource="EMBL-CDS" id="AAH99351"/>
    </conflict>
    <text>Extended N-terminus.</text>
</comment>
<comment type="sequence caution" evidence="4">
    <conflict type="erroneous initiation">
        <sequence resource="EMBL-CDS" id="AAI33236"/>
    </conflict>
    <text>Extended N-terminus.</text>
</comment>
<accession>Q4KL92</accession>
<evidence type="ECO:0000250" key="1">
    <source>
        <dbReference type="UniProtKB" id="Q68J44"/>
    </source>
</evidence>
<evidence type="ECO:0000250" key="2">
    <source>
        <dbReference type="UniProtKB" id="Q8BK84"/>
    </source>
</evidence>
<evidence type="ECO:0000255" key="3">
    <source>
        <dbReference type="PROSITE-ProRule" id="PRU00160"/>
    </source>
</evidence>
<evidence type="ECO:0000305" key="4"/>
<keyword id="KW-0963">Cytoplasm</keyword>
<keyword id="KW-0378">Hydrolase</keyword>
<keyword id="KW-0539">Nucleus</keyword>
<keyword id="KW-0904">Protein phosphatase</keyword>
<keyword id="KW-1185">Reference proteome</keyword>
<gene>
    <name type="primary">dusp29</name>
    <name type="synonym">dupd1</name>
</gene>
<name>DUS29_XENLA</name>
<reference key="1">
    <citation type="submission" date="2007-02" db="EMBL/GenBank/DDBJ databases">
        <authorList>
            <consortium name="NIH - Xenopus Gene Collection (XGC) project"/>
        </authorList>
    </citation>
    <scope>NUCLEOTIDE SEQUENCE [LARGE SCALE MRNA]</scope>
</reference>
<dbReference type="EC" id="3.1.3.16" evidence="1"/>
<dbReference type="EC" id="3.1.3.48" evidence="1"/>
<dbReference type="EMBL" id="BC099351">
    <property type="protein sequence ID" value="AAH99351.1"/>
    <property type="status" value="ALT_INIT"/>
    <property type="molecule type" value="mRNA"/>
</dbReference>
<dbReference type="EMBL" id="BC133235">
    <property type="protein sequence ID" value="AAI33236.1"/>
    <property type="status" value="ALT_INIT"/>
    <property type="molecule type" value="mRNA"/>
</dbReference>
<dbReference type="RefSeq" id="NP_001153482.1">
    <property type="nucleotide sequence ID" value="NM_001160010.1"/>
</dbReference>
<dbReference type="SMR" id="Q4KL92"/>
<dbReference type="GeneID" id="733311"/>
<dbReference type="KEGG" id="xla:733311"/>
<dbReference type="AGR" id="Xenbase:XB-GENE-5944548"/>
<dbReference type="CTD" id="733311"/>
<dbReference type="Xenbase" id="XB-GENE-5944548">
    <property type="gene designation" value="dusp29.S"/>
</dbReference>
<dbReference type="OrthoDB" id="10252009at2759"/>
<dbReference type="Proteomes" id="UP000186698">
    <property type="component" value="Chromosome 7S"/>
</dbReference>
<dbReference type="Bgee" id="733311">
    <property type="expression patterns" value="Expressed in muscle tissue and 6 other cell types or tissues"/>
</dbReference>
<dbReference type="GO" id="GO:0005737">
    <property type="term" value="C:cytoplasm"/>
    <property type="evidence" value="ECO:0000250"/>
    <property type="project" value="UniProtKB"/>
</dbReference>
<dbReference type="GO" id="GO:0005634">
    <property type="term" value="C:nucleus"/>
    <property type="evidence" value="ECO:0000250"/>
    <property type="project" value="UniProtKB"/>
</dbReference>
<dbReference type="GO" id="GO:0033549">
    <property type="term" value="F:MAP kinase phosphatase activity"/>
    <property type="evidence" value="ECO:0000318"/>
    <property type="project" value="GO_Central"/>
</dbReference>
<dbReference type="GO" id="GO:0004722">
    <property type="term" value="F:protein serine/threonine phosphatase activity"/>
    <property type="evidence" value="ECO:0007669"/>
    <property type="project" value="UniProtKB-EC"/>
</dbReference>
<dbReference type="GO" id="GO:0004725">
    <property type="term" value="F:protein tyrosine phosphatase activity"/>
    <property type="evidence" value="ECO:0007669"/>
    <property type="project" value="UniProtKB-EC"/>
</dbReference>
<dbReference type="GO" id="GO:0008138">
    <property type="term" value="F:protein tyrosine/serine/threonine phosphatase activity"/>
    <property type="evidence" value="ECO:0000250"/>
    <property type="project" value="UniProtKB"/>
</dbReference>
<dbReference type="GO" id="GO:0043409">
    <property type="term" value="P:negative regulation of MAPK cascade"/>
    <property type="evidence" value="ECO:0000318"/>
    <property type="project" value="GO_Central"/>
</dbReference>
<dbReference type="GO" id="GO:0006470">
    <property type="term" value="P:protein dephosphorylation"/>
    <property type="evidence" value="ECO:0000250"/>
    <property type="project" value="UniProtKB"/>
</dbReference>
<dbReference type="CDD" id="cd14575">
    <property type="entry name" value="DUPD1"/>
    <property type="match status" value="1"/>
</dbReference>
<dbReference type="FunFam" id="3.90.190.10:FF:000037">
    <property type="entry name" value="dual specificity protein phosphatase 26"/>
    <property type="match status" value="1"/>
</dbReference>
<dbReference type="Gene3D" id="3.90.190.10">
    <property type="entry name" value="Protein tyrosine phosphatase superfamily"/>
    <property type="match status" value="1"/>
</dbReference>
<dbReference type="InterPro" id="IPR020405">
    <property type="entry name" value="Atypical_DUSP_subfamA"/>
</dbReference>
<dbReference type="InterPro" id="IPR000340">
    <property type="entry name" value="Dual-sp_phosphatase_cat-dom"/>
</dbReference>
<dbReference type="InterPro" id="IPR029021">
    <property type="entry name" value="Prot-tyrosine_phosphatase-like"/>
</dbReference>
<dbReference type="InterPro" id="IPR000387">
    <property type="entry name" value="Tyr_Pase_dom"/>
</dbReference>
<dbReference type="InterPro" id="IPR020422">
    <property type="entry name" value="TYR_PHOSPHATASE_DUAL_dom"/>
</dbReference>
<dbReference type="PANTHER" id="PTHR45682">
    <property type="entry name" value="AGAP008228-PA"/>
    <property type="match status" value="1"/>
</dbReference>
<dbReference type="PANTHER" id="PTHR45682:SF6">
    <property type="entry name" value="DUAL SPECIFICITY PHOSPHATASE 29"/>
    <property type="match status" value="1"/>
</dbReference>
<dbReference type="Pfam" id="PF00782">
    <property type="entry name" value="DSPc"/>
    <property type="match status" value="1"/>
</dbReference>
<dbReference type="PRINTS" id="PR01908">
    <property type="entry name" value="ADSPHPHTASE"/>
</dbReference>
<dbReference type="PRINTS" id="PR01909">
    <property type="entry name" value="ADSPHPHTASEA"/>
</dbReference>
<dbReference type="SMART" id="SM00195">
    <property type="entry name" value="DSPc"/>
    <property type="match status" value="1"/>
</dbReference>
<dbReference type="SUPFAM" id="SSF52799">
    <property type="entry name" value="(Phosphotyrosine protein) phosphatases II"/>
    <property type="match status" value="1"/>
</dbReference>
<dbReference type="PROSITE" id="PS50056">
    <property type="entry name" value="TYR_PHOSPHATASE_2"/>
    <property type="match status" value="1"/>
</dbReference>
<dbReference type="PROSITE" id="PS50054">
    <property type="entry name" value="TYR_PHOSPHATASE_DUAL"/>
    <property type="match status" value="1"/>
</dbReference>